<keyword id="KW-0067">ATP-binding</keyword>
<keyword id="KW-0963">Cytoplasm</keyword>
<keyword id="KW-0347">Helicase</keyword>
<keyword id="KW-0378">Hydrolase</keyword>
<keyword id="KW-0396">Initiation factor</keyword>
<keyword id="KW-0547">Nucleotide-binding</keyword>
<keyword id="KW-0648">Protein biosynthesis</keyword>
<keyword id="KW-1185">Reference proteome</keyword>
<keyword id="KW-0694">RNA-binding</keyword>
<dbReference type="EC" id="3.6.4.13"/>
<dbReference type="EMBL" id="AM270071">
    <property type="protein sequence ID" value="CAL00690.1"/>
    <property type="molecule type" value="Genomic_DNA"/>
</dbReference>
<dbReference type="RefSeq" id="XP_001401571.1">
    <property type="nucleotide sequence ID" value="XM_001401534.1"/>
</dbReference>
<dbReference type="SMR" id="A2QI25"/>
<dbReference type="EnsemblFungi" id="CAL00690">
    <property type="protein sequence ID" value="CAL00690"/>
    <property type="gene ID" value="An04g02030"/>
</dbReference>
<dbReference type="GeneID" id="4990608"/>
<dbReference type="KEGG" id="ang:An04g02030"/>
<dbReference type="VEuPathDB" id="FungiDB:An04g02030"/>
<dbReference type="HOGENOM" id="CLU_003041_16_3_1"/>
<dbReference type="Proteomes" id="UP000006706">
    <property type="component" value="Chromosome 6L"/>
</dbReference>
<dbReference type="GO" id="GO:0010494">
    <property type="term" value="C:cytoplasmic stress granule"/>
    <property type="evidence" value="ECO:0007669"/>
    <property type="project" value="EnsemblFungi"/>
</dbReference>
<dbReference type="GO" id="GO:0005681">
    <property type="term" value="C:spliceosomal complex"/>
    <property type="evidence" value="ECO:0007669"/>
    <property type="project" value="EnsemblFungi"/>
</dbReference>
<dbReference type="GO" id="GO:0005524">
    <property type="term" value="F:ATP binding"/>
    <property type="evidence" value="ECO:0007669"/>
    <property type="project" value="UniProtKB-KW"/>
</dbReference>
<dbReference type="GO" id="GO:0016887">
    <property type="term" value="F:ATP hydrolysis activity"/>
    <property type="evidence" value="ECO:0007669"/>
    <property type="project" value="RHEA"/>
</dbReference>
<dbReference type="GO" id="GO:0031370">
    <property type="term" value="F:eukaryotic initiation factor 4G binding"/>
    <property type="evidence" value="ECO:0007669"/>
    <property type="project" value="EnsemblFungi"/>
</dbReference>
<dbReference type="GO" id="GO:0051880">
    <property type="term" value="F:G-quadruplex DNA binding"/>
    <property type="evidence" value="ECO:0007669"/>
    <property type="project" value="EnsemblFungi"/>
</dbReference>
<dbReference type="GO" id="GO:0002151">
    <property type="term" value="F:G-quadruplex RNA binding"/>
    <property type="evidence" value="ECO:0007669"/>
    <property type="project" value="EnsemblFungi"/>
</dbReference>
<dbReference type="GO" id="GO:0003729">
    <property type="term" value="F:mRNA binding"/>
    <property type="evidence" value="ECO:0007669"/>
    <property type="project" value="EnsemblFungi"/>
</dbReference>
<dbReference type="GO" id="GO:0003724">
    <property type="term" value="F:RNA helicase activity"/>
    <property type="evidence" value="ECO:0007669"/>
    <property type="project" value="UniProtKB-EC"/>
</dbReference>
<dbReference type="GO" id="GO:0033592">
    <property type="term" value="F:RNA strand annealing activity"/>
    <property type="evidence" value="ECO:0007669"/>
    <property type="project" value="EnsemblFungi"/>
</dbReference>
<dbReference type="GO" id="GO:0003743">
    <property type="term" value="F:translation initiation factor activity"/>
    <property type="evidence" value="ECO:0007669"/>
    <property type="project" value="UniProtKB-KW"/>
</dbReference>
<dbReference type="GO" id="GO:0002183">
    <property type="term" value="P:cytoplasmic translational initiation"/>
    <property type="evidence" value="ECO:0007669"/>
    <property type="project" value="EnsemblFungi"/>
</dbReference>
<dbReference type="GO" id="GO:1990625">
    <property type="term" value="P:negative regulation of cytoplasmic translational initiation in response to stress"/>
    <property type="evidence" value="ECO:0007669"/>
    <property type="project" value="EnsemblFungi"/>
</dbReference>
<dbReference type="GO" id="GO:1901195">
    <property type="term" value="P:positive regulation of formation of translation preinitiation complex"/>
    <property type="evidence" value="ECO:0007669"/>
    <property type="project" value="EnsemblFungi"/>
</dbReference>
<dbReference type="GO" id="GO:0031047">
    <property type="term" value="P:regulatory ncRNA-mediated gene silencing"/>
    <property type="evidence" value="ECO:0007669"/>
    <property type="project" value="EnsemblFungi"/>
</dbReference>
<dbReference type="GO" id="GO:0000390">
    <property type="term" value="P:spliceosomal complex disassembly"/>
    <property type="evidence" value="ECO:0007669"/>
    <property type="project" value="EnsemblFungi"/>
</dbReference>
<dbReference type="CDD" id="cd17967">
    <property type="entry name" value="DEADc_DDX3_DDX4"/>
    <property type="match status" value="1"/>
</dbReference>
<dbReference type="CDD" id="cd18787">
    <property type="entry name" value="SF2_C_DEAD"/>
    <property type="match status" value="1"/>
</dbReference>
<dbReference type="FunFam" id="3.40.50.300:FF:000160">
    <property type="entry name" value="ATP-dependent RNA helicase DDX3X"/>
    <property type="match status" value="1"/>
</dbReference>
<dbReference type="FunFam" id="3.40.50.300:FF:000008">
    <property type="entry name" value="ATP-dependent RNA helicase RhlB"/>
    <property type="match status" value="1"/>
</dbReference>
<dbReference type="Gene3D" id="3.40.50.300">
    <property type="entry name" value="P-loop containing nucleotide triphosphate hydrolases"/>
    <property type="match status" value="2"/>
</dbReference>
<dbReference type="InterPro" id="IPR011545">
    <property type="entry name" value="DEAD/DEAH_box_helicase_dom"/>
</dbReference>
<dbReference type="InterPro" id="IPR044763">
    <property type="entry name" value="Ded1/Dbp1_DEADc"/>
</dbReference>
<dbReference type="InterPro" id="IPR014001">
    <property type="entry name" value="Helicase_ATP-bd"/>
</dbReference>
<dbReference type="InterPro" id="IPR001650">
    <property type="entry name" value="Helicase_C-like"/>
</dbReference>
<dbReference type="InterPro" id="IPR027417">
    <property type="entry name" value="P-loop_NTPase"/>
</dbReference>
<dbReference type="InterPro" id="IPR000629">
    <property type="entry name" value="RNA-helicase_DEAD-box_CS"/>
</dbReference>
<dbReference type="InterPro" id="IPR014014">
    <property type="entry name" value="RNA_helicase_DEAD_Q_motif"/>
</dbReference>
<dbReference type="PANTHER" id="PTHR47958">
    <property type="entry name" value="ATP-DEPENDENT RNA HELICASE DBP3"/>
    <property type="match status" value="1"/>
</dbReference>
<dbReference type="Pfam" id="PF00270">
    <property type="entry name" value="DEAD"/>
    <property type="match status" value="1"/>
</dbReference>
<dbReference type="Pfam" id="PF00271">
    <property type="entry name" value="Helicase_C"/>
    <property type="match status" value="1"/>
</dbReference>
<dbReference type="SMART" id="SM00487">
    <property type="entry name" value="DEXDc"/>
    <property type="match status" value="1"/>
</dbReference>
<dbReference type="SMART" id="SM00490">
    <property type="entry name" value="HELICc"/>
    <property type="match status" value="1"/>
</dbReference>
<dbReference type="SUPFAM" id="SSF52540">
    <property type="entry name" value="P-loop containing nucleoside triphosphate hydrolases"/>
    <property type="match status" value="1"/>
</dbReference>
<dbReference type="PROSITE" id="PS00039">
    <property type="entry name" value="DEAD_ATP_HELICASE"/>
    <property type="match status" value="1"/>
</dbReference>
<dbReference type="PROSITE" id="PS51192">
    <property type="entry name" value="HELICASE_ATP_BIND_1"/>
    <property type="match status" value="1"/>
</dbReference>
<dbReference type="PROSITE" id="PS51194">
    <property type="entry name" value="HELICASE_CTER"/>
    <property type="match status" value="1"/>
</dbReference>
<dbReference type="PROSITE" id="PS51195">
    <property type="entry name" value="Q_MOTIF"/>
    <property type="match status" value="1"/>
</dbReference>
<evidence type="ECO:0000250" key="1"/>
<evidence type="ECO:0000255" key="2">
    <source>
        <dbReference type="PROSITE-ProRule" id="PRU00541"/>
    </source>
</evidence>
<evidence type="ECO:0000255" key="3">
    <source>
        <dbReference type="PROSITE-ProRule" id="PRU00542"/>
    </source>
</evidence>
<evidence type="ECO:0000256" key="4">
    <source>
        <dbReference type="SAM" id="MobiDB-lite"/>
    </source>
</evidence>
<evidence type="ECO:0000305" key="5"/>
<reference key="1">
    <citation type="journal article" date="2007" name="Nat. Biotechnol.">
        <title>Genome sequencing and analysis of the versatile cell factory Aspergillus niger CBS 513.88.</title>
        <authorList>
            <person name="Pel H.J."/>
            <person name="de Winde J.H."/>
            <person name="Archer D.B."/>
            <person name="Dyer P.S."/>
            <person name="Hofmann G."/>
            <person name="Schaap P.J."/>
            <person name="Turner G."/>
            <person name="de Vries R.P."/>
            <person name="Albang R."/>
            <person name="Albermann K."/>
            <person name="Andersen M.R."/>
            <person name="Bendtsen J.D."/>
            <person name="Benen J.A.E."/>
            <person name="van den Berg M."/>
            <person name="Breestraat S."/>
            <person name="Caddick M.X."/>
            <person name="Contreras R."/>
            <person name="Cornell M."/>
            <person name="Coutinho P.M."/>
            <person name="Danchin E.G.J."/>
            <person name="Debets A.J.M."/>
            <person name="Dekker P."/>
            <person name="van Dijck P.W.M."/>
            <person name="van Dijk A."/>
            <person name="Dijkhuizen L."/>
            <person name="Driessen A.J.M."/>
            <person name="d'Enfert C."/>
            <person name="Geysens S."/>
            <person name="Goosen C."/>
            <person name="Groot G.S.P."/>
            <person name="de Groot P.W.J."/>
            <person name="Guillemette T."/>
            <person name="Henrissat B."/>
            <person name="Herweijer M."/>
            <person name="van den Hombergh J.P.T.W."/>
            <person name="van den Hondel C.A.M.J.J."/>
            <person name="van der Heijden R.T.J.M."/>
            <person name="van der Kaaij R.M."/>
            <person name="Klis F.M."/>
            <person name="Kools H.J."/>
            <person name="Kubicek C.P."/>
            <person name="van Kuyk P.A."/>
            <person name="Lauber J."/>
            <person name="Lu X."/>
            <person name="van der Maarel M.J.E.C."/>
            <person name="Meulenberg R."/>
            <person name="Menke H."/>
            <person name="Mortimer M.A."/>
            <person name="Nielsen J."/>
            <person name="Oliver S.G."/>
            <person name="Olsthoorn M."/>
            <person name="Pal K."/>
            <person name="van Peij N.N.M.E."/>
            <person name="Ram A.F.J."/>
            <person name="Rinas U."/>
            <person name="Roubos J.A."/>
            <person name="Sagt C.M.J."/>
            <person name="Schmoll M."/>
            <person name="Sun J."/>
            <person name="Ussery D."/>
            <person name="Varga J."/>
            <person name="Vervecken W."/>
            <person name="van de Vondervoort P.J.J."/>
            <person name="Wedler H."/>
            <person name="Woesten H.A.B."/>
            <person name="Zeng A.-P."/>
            <person name="van Ooyen A.J.J."/>
            <person name="Visser J."/>
            <person name="Stam H."/>
        </authorList>
    </citation>
    <scope>NUCLEOTIDE SEQUENCE [LARGE SCALE GENOMIC DNA]</scope>
    <source>
        <strain>ATCC MYA-4892 / CBS 513.88 / FGSC A1513</strain>
    </source>
</reference>
<proteinExistence type="inferred from homology"/>
<gene>
    <name type="primary">ded1</name>
    <name type="ORF">An04g02030</name>
</gene>
<organism>
    <name type="scientific">Aspergillus niger (strain ATCC MYA-4892 / CBS 513.88 / FGSC A1513)</name>
    <dbReference type="NCBI Taxonomy" id="425011"/>
    <lineage>
        <taxon>Eukaryota</taxon>
        <taxon>Fungi</taxon>
        <taxon>Dikarya</taxon>
        <taxon>Ascomycota</taxon>
        <taxon>Pezizomycotina</taxon>
        <taxon>Eurotiomycetes</taxon>
        <taxon>Eurotiomycetidae</taxon>
        <taxon>Eurotiales</taxon>
        <taxon>Aspergillaceae</taxon>
        <taxon>Aspergillus</taxon>
        <taxon>Aspergillus subgen. Circumdati</taxon>
    </lineage>
</organism>
<name>DED1_ASPNC</name>
<feature type="chain" id="PRO_0000281687" description="ATP-dependent RNA helicase ded1">
    <location>
        <begin position="1"/>
        <end position="678"/>
    </location>
</feature>
<feature type="domain" description="Helicase ATP-binding" evidence="2">
    <location>
        <begin position="218"/>
        <end position="411"/>
    </location>
</feature>
<feature type="domain" description="Helicase C-terminal" evidence="3">
    <location>
        <begin position="422"/>
        <end position="583"/>
    </location>
</feature>
<feature type="region of interest" description="Disordered" evidence="4">
    <location>
        <begin position="1"/>
        <end position="159"/>
    </location>
</feature>
<feature type="region of interest" description="Disordered" evidence="4">
    <location>
        <begin position="584"/>
        <end position="678"/>
    </location>
</feature>
<feature type="short sequence motif" description="Q motif">
    <location>
        <begin position="187"/>
        <end position="215"/>
    </location>
</feature>
<feature type="short sequence motif" description="DEAD box">
    <location>
        <begin position="355"/>
        <end position="358"/>
    </location>
</feature>
<feature type="compositionally biased region" description="Gly residues" evidence="4">
    <location>
        <begin position="62"/>
        <end position="73"/>
    </location>
</feature>
<feature type="compositionally biased region" description="Gly residues" evidence="4">
    <location>
        <begin position="112"/>
        <end position="130"/>
    </location>
</feature>
<feature type="compositionally biased region" description="Gly residues" evidence="4">
    <location>
        <begin position="587"/>
        <end position="600"/>
    </location>
</feature>
<feature type="compositionally biased region" description="Gly residues" evidence="4">
    <location>
        <begin position="611"/>
        <end position="641"/>
    </location>
</feature>
<feature type="compositionally biased region" description="Gly residues" evidence="4">
    <location>
        <begin position="649"/>
        <end position="667"/>
    </location>
</feature>
<feature type="compositionally biased region" description="Low complexity" evidence="4">
    <location>
        <begin position="668"/>
        <end position="678"/>
    </location>
</feature>
<feature type="binding site" evidence="2">
    <location>
        <begin position="231"/>
        <end position="238"/>
    </location>
    <ligand>
        <name>ATP</name>
        <dbReference type="ChEBI" id="CHEBI:30616"/>
    </ligand>
</feature>
<comment type="function">
    <text evidence="1">ATP-binding RNA helicase involved in translation initiation. Remodels RNA in response to ADP and ATP concentrations by facilitating disruption, but also formation of RNA duplexes (By similarity).</text>
</comment>
<comment type="catalytic activity">
    <reaction>
        <text>ATP + H2O = ADP + phosphate + H(+)</text>
        <dbReference type="Rhea" id="RHEA:13065"/>
        <dbReference type="ChEBI" id="CHEBI:15377"/>
        <dbReference type="ChEBI" id="CHEBI:15378"/>
        <dbReference type="ChEBI" id="CHEBI:30616"/>
        <dbReference type="ChEBI" id="CHEBI:43474"/>
        <dbReference type="ChEBI" id="CHEBI:456216"/>
        <dbReference type="EC" id="3.6.4.13"/>
    </reaction>
</comment>
<comment type="subcellular location">
    <subcellularLocation>
        <location evidence="1">Cytoplasm</location>
    </subcellularLocation>
</comment>
<comment type="domain">
    <text>The Q motif is unique to and characteristic of the DEAD box family of RNA helicases and controls ATP binding and hydrolysis.</text>
</comment>
<comment type="similarity">
    <text evidence="5">Belongs to the DEAD box helicase family. DDX3/DED1 subfamily.</text>
</comment>
<protein>
    <recommendedName>
        <fullName>ATP-dependent RNA helicase ded1</fullName>
        <ecNumber>3.6.4.13</ecNumber>
    </recommendedName>
</protein>
<sequence length="678" mass="72132">MADSLKMGNLSLNESQHAPAPAPSTGRAAYIPPHLRGRQMGGNMDGAAAAAPPPGPAAGPGNSWGGPRGGPRGGQWANANAPDFSPRGPNGNTSWSPHEARRPFNPNAYGHPGHGGSYGSGGGSARGSGDGQWRDGKHIPGPANPRLERELFGLPNDPTKQNTGINFANYDDIPVEASGHDVPEPVNAFTNPPLDDHLIENIKLAHYQTPTPVQKYSIPIVMNGRDLMACAQTGSGKTGGFLFPILSQAYQNGPSAAPAQAGGQFGYGRQRKAYPTSLILAPTRELVSQIFDEARKFAYRSWVRPCVVYGGADIGSQLRQIERGCDLLVATPGRLVDLIERGRISLVNIKYLILDEADRMLDMGFEPQIRRIVEGEDMPHVNDRQTLMFSATFPRDIQMLARDFLKDYVFLSVGRVGSTSENITQKVEYVEDHDKRSVLLDILHTHGTSGLTLIFVETKRMADSLSDFLLNQRFPATAIHGDRTQRERERALEMFRSGRCPILVATAVAARGLDIPNVTHVINYDLPTDIDDYVHRIGRTGRAGNTGIATAFFNRGNRGVVRDLIDLLKEAHQEVPSFLESIAREGSGYGGRGGRGGRGRGANATRDMRRMGGGMGGPPSFGGSSYGAPGGSYGGGGGGSSSYGAPPSYGGGGGYGGGGSYGGGYGNPSGPTGPSSWW</sequence>
<accession>A2QI25</accession>